<accession>Q61979</accession>
<accession>Q548Q0</accession>
<accession>Q61980</accession>
<accession>Q61981</accession>
<feature type="chain" id="PRO_0000096883" description="Neuronatin">
    <location>
        <begin position="1"/>
        <end position="81"/>
    </location>
</feature>
<feature type="splice variant" id="VSP_004333" description="In isoform 2." evidence="1">
    <location>
        <begin position="25"/>
        <end position="51"/>
    </location>
</feature>
<name>NNAT_MOUSE</name>
<protein>
    <recommendedName>
        <fullName>Neuronatin</fullName>
    </recommendedName>
</protein>
<keyword id="KW-0025">Alternative splicing</keyword>
<keyword id="KW-0217">Developmental protein</keyword>
<keyword id="KW-1185">Reference proteome</keyword>
<dbReference type="EMBL" id="X83568">
    <property type="protein sequence ID" value="CAA58551.1"/>
    <property type="status" value="ALT_SEQ"/>
    <property type="molecule type" value="mRNA"/>
</dbReference>
<dbReference type="EMBL" id="X83569">
    <property type="protein sequence ID" value="CAA58552.1"/>
    <property type="molecule type" value="mRNA"/>
</dbReference>
<dbReference type="EMBL" id="X83570">
    <property type="protein sequence ID" value="CAA58553.1"/>
    <property type="molecule type" value="mRNA"/>
</dbReference>
<dbReference type="EMBL" id="AF303656">
    <property type="protein sequence ID" value="AAL01185.1"/>
    <property type="molecule type" value="Genomic_DNA"/>
</dbReference>
<dbReference type="EMBL" id="AK160626">
    <property type="protein sequence ID" value="BAE35925.1"/>
    <property type="molecule type" value="mRNA"/>
</dbReference>
<dbReference type="EMBL" id="AL672259">
    <property type="status" value="NOT_ANNOTATED_CDS"/>
    <property type="molecule type" value="Genomic_DNA"/>
</dbReference>
<dbReference type="EMBL" id="BC036984">
    <property type="protein sequence ID" value="AAH36984.1"/>
    <property type="molecule type" value="mRNA"/>
</dbReference>
<dbReference type="CCDS" id="CCDS38306.1">
    <molecule id="Q61979-1"/>
</dbReference>
<dbReference type="CCDS" id="CCDS38307.1">
    <molecule id="Q61979-3"/>
</dbReference>
<dbReference type="PIR" id="S51082">
    <property type="entry name" value="S51082"/>
</dbReference>
<dbReference type="PIR" id="S51083">
    <property type="entry name" value="S51083"/>
</dbReference>
<dbReference type="PIR" id="S51084">
    <property type="entry name" value="S51084"/>
</dbReference>
<dbReference type="RefSeq" id="NP_001278057.1">
    <property type="nucleotide sequence ID" value="NM_001291128.1"/>
</dbReference>
<dbReference type="RefSeq" id="NP_001278058.1">
    <property type="nucleotide sequence ID" value="NM_001291129.1"/>
</dbReference>
<dbReference type="RefSeq" id="NP_001278059.1">
    <property type="nucleotide sequence ID" value="NM_001291130.1"/>
</dbReference>
<dbReference type="RefSeq" id="NP_035053.1">
    <molecule id="Q61979-1"/>
    <property type="nucleotide sequence ID" value="NM_010923.3"/>
</dbReference>
<dbReference type="RefSeq" id="NP_851291.1">
    <molecule id="Q61979-3"/>
    <property type="nucleotide sequence ID" value="NM_180960.3"/>
</dbReference>
<dbReference type="FunCoup" id="Q61979">
    <property type="interactions" value="74"/>
</dbReference>
<dbReference type="STRING" id="10090.ENSMUSP00000085836"/>
<dbReference type="iPTMnet" id="Q61979"/>
<dbReference type="PhosphoSitePlus" id="Q61979"/>
<dbReference type="PaxDb" id="10090-ENSMUSP00000105152"/>
<dbReference type="ProteomicsDB" id="253087">
    <molecule id="Q61979-1"/>
</dbReference>
<dbReference type="DNASU" id="18111"/>
<dbReference type="Ensembl" id="ENSMUST00000109526.2">
    <molecule id="Q61979-1"/>
    <property type="protein sequence ID" value="ENSMUSP00000105152.2"/>
    <property type="gene ID" value="ENSMUSG00000067786.17"/>
</dbReference>
<dbReference type="Ensembl" id="ENSMUST00000153739.9">
    <molecule id="Q61979-3"/>
    <property type="protein sequence ID" value="ENSMUSP00000129821.2"/>
    <property type="gene ID" value="ENSMUSG00000067786.17"/>
</dbReference>
<dbReference type="GeneID" id="18111"/>
<dbReference type="KEGG" id="mmu:18111"/>
<dbReference type="UCSC" id="uc008npe.2">
    <molecule id="Q61979-1"/>
    <property type="organism name" value="mouse"/>
</dbReference>
<dbReference type="AGR" id="MGI:104716"/>
<dbReference type="CTD" id="4826"/>
<dbReference type="MGI" id="MGI:104716">
    <property type="gene designation" value="Nnat"/>
</dbReference>
<dbReference type="VEuPathDB" id="HostDB:ENSMUSG00000067786"/>
<dbReference type="eggNOG" id="ENOG502TDP2">
    <property type="taxonomic scope" value="Eukaryota"/>
</dbReference>
<dbReference type="GeneTree" id="ENSGT00940000166501"/>
<dbReference type="HOGENOM" id="CLU_152636_0_0_1"/>
<dbReference type="InParanoid" id="Q61979"/>
<dbReference type="OMA" id="IAENECI"/>
<dbReference type="OrthoDB" id="9823442at2759"/>
<dbReference type="PhylomeDB" id="Q61979"/>
<dbReference type="TreeFam" id="TF338710"/>
<dbReference type="BioGRID-ORCS" id="18111">
    <property type="hits" value="3 hits in 73 CRISPR screens"/>
</dbReference>
<dbReference type="ChiTaRS" id="Nnat">
    <property type="organism name" value="mouse"/>
</dbReference>
<dbReference type="PRO" id="PR:Q61979"/>
<dbReference type="Proteomes" id="UP000000589">
    <property type="component" value="Chromosome 2"/>
</dbReference>
<dbReference type="RNAct" id="Q61979">
    <property type="molecule type" value="protein"/>
</dbReference>
<dbReference type="Bgee" id="ENSMUSG00000067786">
    <property type="expression patterns" value="Expressed in median eminence of neurohypophysis and 271 other cell types or tissues"/>
</dbReference>
<dbReference type="ExpressionAtlas" id="Q61979">
    <property type="expression patterns" value="baseline and differential"/>
</dbReference>
<dbReference type="GO" id="GO:0005737">
    <property type="term" value="C:cytoplasm"/>
    <property type="evidence" value="ECO:0000314"/>
    <property type="project" value="MGI"/>
</dbReference>
<dbReference type="GO" id="GO:0007420">
    <property type="term" value="P:brain development"/>
    <property type="evidence" value="ECO:0007669"/>
    <property type="project" value="InterPro"/>
</dbReference>
<dbReference type="GO" id="GO:0051649">
    <property type="term" value="P:establishment of localization in cell"/>
    <property type="evidence" value="ECO:0000315"/>
    <property type="project" value="MGI"/>
</dbReference>
<dbReference type="GO" id="GO:0030073">
    <property type="term" value="P:insulin secretion"/>
    <property type="evidence" value="ECO:0000315"/>
    <property type="project" value="MGI"/>
</dbReference>
<dbReference type="GO" id="GO:0032024">
    <property type="term" value="P:positive regulation of insulin secretion"/>
    <property type="evidence" value="ECO:0000315"/>
    <property type="project" value="MGI"/>
</dbReference>
<dbReference type="GO" id="GO:0032880">
    <property type="term" value="P:regulation of protein localization"/>
    <property type="evidence" value="ECO:0000315"/>
    <property type="project" value="MGI"/>
</dbReference>
<dbReference type="GO" id="GO:0009749">
    <property type="term" value="P:response to glucose"/>
    <property type="evidence" value="ECO:0000315"/>
    <property type="project" value="MGI"/>
</dbReference>
<dbReference type="InterPro" id="IPR024885">
    <property type="entry name" value="Neuronatin"/>
</dbReference>
<dbReference type="PANTHER" id="PTHR15285">
    <property type="entry name" value="NEURONATIN"/>
    <property type="match status" value="1"/>
</dbReference>
<dbReference type="PANTHER" id="PTHR15285:SF0">
    <property type="entry name" value="NEURONATIN"/>
    <property type="match status" value="1"/>
</dbReference>
<gene>
    <name type="primary">Nnat</name>
</gene>
<proteinExistence type="evidence at transcript level"/>
<comment type="function">
    <text>May participate in the maintenance of segment identity in the hindbrain and pituitary development, and maturation or maintenance of the overall structure of the nervous system.</text>
</comment>
<comment type="alternative products">
    <event type="alternative splicing"/>
    <isoform>
        <id>Q61979-1</id>
        <name>1</name>
        <sequence type="displayed"/>
    </isoform>
    <isoform>
        <id>Q61979-3</id>
        <name>2</name>
        <sequence type="described" ref="VSP_004333"/>
    </isoform>
</comment>
<comment type="tissue specificity">
    <text>Highest in brain and ovary.</text>
</comment>
<comment type="developmental stage">
    <text>Expressed in rhombomeres 3 and 5 during early hindbrain development and in the floor of the foregut pocket. Also expressed in the early Rathke pouch, derived adenohypophysis, and developing inner ear. During later embryogenesis, strongly expressed in the major part of the central and peripheral nervous system.</text>
</comment>
<comment type="similarity">
    <text evidence="2">Belongs to the neuronatin family.</text>
</comment>
<comment type="sequence caution" evidence="2">
    <conflict type="miscellaneous discrepancy">
        <sequence resource="EMBL-CDS" id="CAA58551"/>
    </conflict>
    <text>Incorrect N-terminal sequence due to reversal of the first 22 base pairs of the cDNA.</text>
</comment>
<sequence>MAAVAAASAELLIIGWYIFRVLLQVFLECCIYWVGFAFRNPPGTQPIARSEVFRYSLQKLAHTVSRTGRQVLGERRQRAPN</sequence>
<evidence type="ECO:0000303" key="1">
    <source>
    </source>
</evidence>
<evidence type="ECO:0000305" key="2"/>
<reference key="1">
    <citation type="journal article" date="1995" name="Dev. Biol.">
        <title>Segment-specific expression of the neuronatin gene during early hindbrain development.</title>
        <authorList>
            <person name="Wijnholds J."/>
            <person name="Chowdhury K."/>
            <person name="Wehr R."/>
            <person name="Gruss P."/>
        </authorList>
    </citation>
    <scope>NUCLEOTIDE SEQUENCE [MRNA] (ISOFORMS 1 AND 2)</scope>
    <source>
        <strain>NMRI</strain>
        <tissue>Brain</tissue>
    </source>
</reference>
<reference key="2">
    <citation type="submission" date="2000-09" db="EMBL/GenBank/DDBJ databases">
        <title>Structure of the murine imprinted locus for neuronatin reveals an unusual organisation.</title>
        <authorList>
            <person name="Aparicio S.A.J.R."/>
            <person name="John R.M."/>
            <person name="Surani A.M."/>
            <person name="Hawker K."/>
        </authorList>
    </citation>
    <scope>NUCLEOTIDE SEQUENCE [GENOMIC DNA]</scope>
</reference>
<reference key="3">
    <citation type="journal article" date="2005" name="Science">
        <title>The transcriptional landscape of the mammalian genome.</title>
        <authorList>
            <person name="Carninci P."/>
            <person name="Kasukawa T."/>
            <person name="Katayama S."/>
            <person name="Gough J."/>
            <person name="Frith M.C."/>
            <person name="Maeda N."/>
            <person name="Oyama R."/>
            <person name="Ravasi T."/>
            <person name="Lenhard B."/>
            <person name="Wells C."/>
            <person name="Kodzius R."/>
            <person name="Shimokawa K."/>
            <person name="Bajic V.B."/>
            <person name="Brenner S.E."/>
            <person name="Batalov S."/>
            <person name="Forrest A.R."/>
            <person name="Zavolan M."/>
            <person name="Davis M.J."/>
            <person name="Wilming L.G."/>
            <person name="Aidinis V."/>
            <person name="Allen J.E."/>
            <person name="Ambesi-Impiombato A."/>
            <person name="Apweiler R."/>
            <person name="Aturaliya R.N."/>
            <person name="Bailey T.L."/>
            <person name="Bansal M."/>
            <person name="Baxter L."/>
            <person name="Beisel K.W."/>
            <person name="Bersano T."/>
            <person name="Bono H."/>
            <person name="Chalk A.M."/>
            <person name="Chiu K.P."/>
            <person name="Choudhary V."/>
            <person name="Christoffels A."/>
            <person name="Clutterbuck D.R."/>
            <person name="Crowe M.L."/>
            <person name="Dalla E."/>
            <person name="Dalrymple B.P."/>
            <person name="de Bono B."/>
            <person name="Della Gatta G."/>
            <person name="di Bernardo D."/>
            <person name="Down T."/>
            <person name="Engstrom P."/>
            <person name="Fagiolini M."/>
            <person name="Faulkner G."/>
            <person name="Fletcher C.F."/>
            <person name="Fukushima T."/>
            <person name="Furuno M."/>
            <person name="Futaki S."/>
            <person name="Gariboldi M."/>
            <person name="Georgii-Hemming P."/>
            <person name="Gingeras T.R."/>
            <person name="Gojobori T."/>
            <person name="Green R.E."/>
            <person name="Gustincich S."/>
            <person name="Harbers M."/>
            <person name="Hayashi Y."/>
            <person name="Hensch T.K."/>
            <person name="Hirokawa N."/>
            <person name="Hill D."/>
            <person name="Huminiecki L."/>
            <person name="Iacono M."/>
            <person name="Ikeo K."/>
            <person name="Iwama A."/>
            <person name="Ishikawa T."/>
            <person name="Jakt M."/>
            <person name="Kanapin A."/>
            <person name="Katoh M."/>
            <person name="Kawasawa Y."/>
            <person name="Kelso J."/>
            <person name="Kitamura H."/>
            <person name="Kitano H."/>
            <person name="Kollias G."/>
            <person name="Krishnan S.P."/>
            <person name="Kruger A."/>
            <person name="Kummerfeld S.K."/>
            <person name="Kurochkin I.V."/>
            <person name="Lareau L.F."/>
            <person name="Lazarevic D."/>
            <person name="Lipovich L."/>
            <person name="Liu J."/>
            <person name="Liuni S."/>
            <person name="McWilliam S."/>
            <person name="Madan Babu M."/>
            <person name="Madera M."/>
            <person name="Marchionni L."/>
            <person name="Matsuda H."/>
            <person name="Matsuzawa S."/>
            <person name="Miki H."/>
            <person name="Mignone F."/>
            <person name="Miyake S."/>
            <person name="Morris K."/>
            <person name="Mottagui-Tabar S."/>
            <person name="Mulder N."/>
            <person name="Nakano N."/>
            <person name="Nakauchi H."/>
            <person name="Ng P."/>
            <person name="Nilsson R."/>
            <person name="Nishiguchi S."/>
            <person name="Nishikawa S."/>
            <person name="Nori F."/>
            <person name="Ohara O."/>
            <person name="Okazaki Y."/>
            <person name="Orlando V."/>
            <person name="Pang K.C."/>
            <person name="Pavan W.J."/>
            <person name="Pavesi G."/>
            <person name="Pesole G."/>
            <person name="Petrovsky N."/>
            <person name="Piazza S."/>
            <person name="Reed J."/>
            <person name="Reid J.F."/>
            <person name="Ring B.Z."/>
            <person name="Ringwald M."/>
            <person name="Rost B."/>
            <person name="Ruan Y."/>
            <person name="Salzberg S.L."/>
            <person name="Sandelin A."/>
            <person name="Schneider C."/>
            <person name="Schoenbach C."/>
            <person name="Sekiguchi K."/>
            <person name="Semple C.A."/>
            <person name="Seno S."/>
            <person name="Sessa L."/>
            <person name="Sheng Y."/>
            <person name="Shibata Y."/>
            <person name="Shimada H."/>
            <person name="Shimada K."/>
            <person name="Silva D."/>
            <person name="Sinclair B."/>
            <person name="Sperling S."/>
            <person name="Stupka E."/>
            <person name="Sugiura K."/>
            <person name="Sultana R."/>
            <person name="Takenaka Y."/>
            <person name="Taki K."/>
            <person name="Tammoja K."/>
            <person name="Tan S.L."/>
            <person name="Tang S."/>
            <person name="Taylor M.S."/>
            <person name="Tegner J."/>
            <person name="Teichmann S.A."/>
            <person name="Ueda H.R."/>
            <person name="van Nimwegen E."/>
            <person name="Verardo R."/>
            <person name="Wei C.L."/>
            <person name="Yagi K."/>
            <person name="Yamanishi H."/>
            <person name="Zabarovsky E."/>
            <person name="Zhu S."/>
            <person name="Zimmer A."/>
            <person name="Hide W."/>
            <person name="Bult C."/>
            <person name="Grimmond S.M."/>
            <person name="Teasdale R.D."/>
            <person name="Liu E.T."/>
            <person name="Brusic V."/>
            <person name="Quackenbush J."/>
            <person name="Wahlestedt C."/>
            <person name="Mattick J.S."/>
            <person name="Hume D.A."/>
            <person name="Kai C."/>
            <person name="Sasaki D."/>
            <person name="Tomaru Y."/>
            <person name="Fukuda S."/>
            <person name="Kanamori-Katayama M."/>
            <person name="Suzuki M."/>
            <person name="Aoki J."/>
            <person name="Arakawa T."/>
            <person name="Iida J."/>
            <person name="Imamura K."/>
            <person name="Itoh M."/>
            <person name="Kato T."/>
            <person name="Kawaji H."/>
            <person name="Kawagashira N."/>
            <person name="Kawashima T."/>
            <person name="Kojima M."/>
            <person name="Kondo S."/>
            <person name="Konno H."/>
            <person name="Nakano K."/>
            <person name="Ninomiya N."/>
            <person name="Nishio T."/>
            <person name="Okada M."/>
            <person name="Plessy C."/>
            <person name="Shibata K."/>
            <person name="Shiraki T."/>
            <person name="Suzuki S."/>
            <person name="Tagami M."/>
            <person name="Waki K."/>
            <person name="Watahiki A."/>
            <person name="Okamura-Oho Y."/>
            <person name="Suzuki H."/>
            <person name="Kawai J."/>
            <person name="Hayashizaki Y."/>
        </authorList>
    </citation>
    <scope>NUCLEOTIDE SEQUENCE [LARGE SCALE MRNA] (ISOFORM 1)</scope>
    <source>
        <strain>C57BL/6J</strain>
    </source>
</reference>
<reference key="4">
    <citation type="journal article" date="2009" name="PLoS Biol.">
        <title>Lineage-specific biology revealed by a finished genome assembly of the mouse.</title>
        <authorList>
            <person name="Church D.M."/>
            <person name="Goodstadt L."/>
            <person name="Hillier L.W."/>
            <person name="Zody M.C."/>
            <person name="Goldstein S."/>
            <person name="She X."/>
            <person name="Bult C.J."/>
            <person name="Agarwala R."/>
            <person name="Cherry J.L."/>
            <person name="DiCuccio M."/>
            <person name="Hlavina W."/>
            <person name="Kapustin Y."/>
            <person name="Meric P."/>
            <person name="Maglott D."/>
            <person name="Birtle Z."/>
            <person name="Marques A.C."/>
            <person name="Graves T."/>
            <person name="Zhou S."/>
            <person name="Teague B."/>
            <person name="Potamousis K."/>
            <person name="Churas C."/>
            <person name="Place M."/>
            <person name="Herschleb J."/>
            <person name="Runnheim R."/>
            <person name="Forrest D."/>
            <person name="Amos-Landgraf J."/>
            <person name="Schwartz D.C."/>
            <person name="Cheng Z."/>
            <person name="Lindblad-Toh K."/>
            <person name="Eichler E.E."/>
            <person name="Ponting C.P."/>
        </authorList>
    </citation>
    <scope>NUCLEOTIDE SEQUENCE [LARGE SCALE GENOMIC DNA]</scope>
    <source>
        <strain>C57BL/6J</strain>
    </source>
</reference>
<reference key="5">
    <citation type="journal article" date="2004" name="Genome Res.">
        <title>The status, quality, and expansion of the NIH full-length cDNA project: the Mammalian Gene Collection (MGC).</title>
        <authorList>
            <consortium name="The MGC Project Team"/>
        </authorList>
    </citation>
    <scope>NUCLEOTIDE SEQUENCE [LARGE SCALE MRNA] (ISOFORM 1)</scope>
    <source>
        <strain>FVB/N</strain>
        <tissue>Colon</tissue>
    </source>
</reference>
<organism>
    <name type="scientific">Mus musculus</name>
    <name type="common">Mouse</name>
    <dbReference type="NCBI Taxonomy" id="10090"/>
    <lineage>
        <taxon>Eukaryota</taxon>
        <taxon>Metazoa</taxon>
        <taxon>Chordata</taxon>
        <taxon>Craniata</taxon>
        <taxon>Vertebrata</taxon>
        <taxon>Euteleostomi</taxon>
        <taxon>Mammalia</taxon>
        <taxon>Eutheria</taxon>
        <taxon>Euarchontoglires</taxon>
        <taxon>Glires</taxon>
        <taxon>Rodentia</taxon>
        <taxon>Myomorpha</taxon>
        <taxon>Muroidea</taxon>
        <taxon>Muridae</taxon>
        <taxon>Murinae</taxon>
        <taxon>Mus</taxon>
        <taxon>Mus</taxon>
    </lineage>
</organism>